<organism>
    <name type="scientific">Mycobacterium bovis (strain BCG / Pasteur 1173P2)</name>
    <dbReference type="NCBI Taxonomy" id="410289"/>
    <lineage>
        <taxon>Bacteria</taxon>
        <taxon>Bacillati</taxon>
        <taxon>Actinomycetota</taxon>
        <taxon>Actinomycetes</taxon>
        <taxon>Mycobacteriales</taxon>
        <taxon>Mycobacteriaceae</taxon>
        <taxon>Mycobacterium</taxon>
        <taxon>Mycobacterium tuberculosis complex</taxon>
    </lineage>
</organism>
<proteinExistence type="inferred from homology"/>
<protein>
    <recommendedName>
        <fullName evidence="1">Small ribosomal subunit protein uS7</fullName>
    </recommendedName>
    <alternativeName>
        <fullName evidence="2">30S ribosomal protein S7</fullName>
    </alternativeName>
</protein>
<reference key="1">
    <citation type="journal article" date="2007" name="Proc. Natl. Acad. Sci. U.S.A.">
        <title>Genome plasticity of BCG and impact on vaccine efficacy.</title>
        <authorList>
            <person name="Brosch R."/>
            <person name="Gordon S.V."/>
            <person name="Garnier T."/>
            <person name="Eiglmeier K."/>
            <person name="Frigui W."/>
            <person name="Valenti P."/>
            <person name="Dos Santos S."/>
            <person name="Duthoy S."/>
            <person name="Lacroix C."/>
            <person name="Garcia-Pelayo C."/>
            <person name="Inwald J.K."/>
            <person name="Golby P."/>
            <person name="Garcia J.N."/>
            <person name="Hewinson R.G."/>
            <person name="Behr M.A."/>
            <person name="Quail M.A."/>
            <person name="Churcher C."/>
            <person name="Barrell B.G."/>
            <person name="Parkhill J."/>
            <person name="Cole S.T."/>
        </authorList>
    </citation>
    <scope>NUCLEOTIDE SEQUENCE [LARGE SCALE GENOMIC DNA]</scope>
    <source>
        <strain>BCG / Pasteur 1173P2</strain>
    </source>
</reference>
<dbReference type="EMBL" id="AM408590">
    <property type="protein sequence ID" value="CAL70718.1"/>
    <property type="molecule type" value="Genomic_DNA"/>
</dbReference>
<dbReference type="RefSeq" id="WP_003403456.1">
    <property type="nucleotide sequence ID" value="NC_008769.1"/>
</dbReference>
<dbReference type="SMR" id="A1KGG3"/>
<dbReference type="GeneID" id="45424645"/>
<dbReference type="KEGG" id="mbb:BCG_0732"/>
<dbReference type="HOGENOM" id="CLU_072226_1_1_11"/>
<dbReference type="Proteomes" id="UP000001472">
    <property type="component" value="Chromosome"/>
</dbReference>
<dbReference type="GO" id="GO:0015935">
    <property type="term" value="C:small ribosomal subunit"/>
    <property type="evidence" value="ECO:0007669"/>
    <property type="project" value="InterPro"/>
</dbReference>
<dbReference type="GO" id="GO:0019843">
    <property type="term" value="F:rRNA binding"/>
    <property type="evidence" value="ECO:0007669"/>
    <property type="project" value="UniProtKB-UniRule"/>
</dbReference>
<dbReference type="GO" id="GO:0003735">
    <property type="term" value="F:structural constituent of ribosome"/>
    <property type="evidence" value="ECO:0007669"/>
    <property type="project" value="InterPro"/>
</dbReference>
<dbReference type="GO" id="GO:0000049">
    <property type="term" value="F:tRNA binding"/>
    <property type="evidence" value="ECO:0007669"/>
    <property type="project" value="UniProtKB-UniRule"/>
</dbReference>
<dbReference type="GO" id="GO:0006412">
    <property type="term" value="P:translation"/>
    <property type="evidence" value="ECO:0007669"/>
    <property type="project" value="UniProtKB-UniRule"/>
</dbReference>
<dbReference type="CDD" id="cd14869">
    <property type="entry name" value="uS7_Bacteria"/>
    <property type="match status" value="1"/>
</dbReference>
<dbReference type="FunFam" id="1.10.455.10:FF:000001">
    <property type="entry name" value="30S ribosomal protein S7"/>
    <property type="match status" value="1"/>
</dbReference>
<dbReference type="Gene3D" id="1.10.455.10">
    <property type="entry name" value="Ribosomal protein S7 domain"/>
    <property type="match status" value="1"/>
</dbReference>
<dbReference type="HAMAP" id="MF_00480_B">
    <property type="entry name" value="Ribosomal_uS7_B"/>
    <property type="match status" value="1"/>
</dbReference>
<dbReference type="InterPro" id="IPR000235">
    <property type="entry name" value="Ribosomal_uS7"/>
</dbReference>
<dbReference type="InterPro" id="IPR005717">
    <property type="entry name" value="Ribosomal_uS7_bac/org-type"/>
</dbReference>
<dbReference type="InterPro" id="IPR020606">
    <property type="entry name" value="Ribosomal_uS7_CS"/>
</dbReference>
<dbReference type="InterPro" id="IPR023798">
    <property type="entry name" value="Ribosomal_uS7_dom"/>
</dbReference>
<dbReference type="InterPro" id="IPR036823">
    <property type="entry name" value="Ribosomal_uS7_dom_sf"/>
</dbReference>
<dbReference type="NCBIfam" id="TIGR01029">
    <property type="entry name" value="rpsG_bact"/>
    <property type="match status" value="1"/>
</dbReference>
<dbReference type="PANTHER" id="PTHR11205">
    <property type="entry name" value="RIBOSOMAL PROTEIN S7"/>
    <property type="match status" value="1"/>
</dbReference>
<dbReference type="Pfam" id="PF00177">
    <property type="entry name" value="Ribosomal_S7"/>
    <property type="match status" value="1"/>
</dbReference>
<dbReference type="PIRSF" id="PIRSF002122">
    <property type="entry name" value="RPS7p_RPS7a_RPS5e_RPS7o"/>
    <property type="match status" value="1"/>
</dbReference>
<dbReference type="SUPFAM" id="SSF47973">
    <property type="entry name" value="Ribosomal protein S7"/>
    <property type="match status" value="1"/>
</dbReference>
<dbReference type="PROSITE" id="PS00052">
    <property type="entry name" value="RIBOSOMAL_S7"/>
    <property type="match status" value="1"/>
</dbReference>
<evidence type="ECO:0000255" key="1">
    <source>
        <dbReference type="HAMAP-Rule" id="MF_00480"/>
    </source>
</evidence>
<evidence type="ECO:0000305" key="2"/>
<sequence>MPRKGPAPKRPLVNDPVYGSQLVTQLVNKVLLKGKKSLAERIVYGALEQARDKTGTDPVITLKRALDNVKPALEVRSRRVGGATYQVPVEVRPDRSTTLALRWLVGYSRQRREKTMIERLANEILDASNGLGASVKRREDTHKMAEANRAFAHYRW</sequence>
<accession>A1KGG3</accession>
<name>RS7_MYCBP</name>
<gene>
    <name evidence="1" type="primary">rpsG</name>
    <name type="ordered locus">BCG_0732</name>
</gene>
<keyword id="KW-0687">Ribonucleoprotein</keyword>
<keyword id="KW-0689">Ribosomal protein</keyword>
<keyword id="KW-0694">RNA-binding</keyword>
<keyword id="KW-0699">rRNA-binding</keyword>
<keyword id="KW-0820">tRNA-binding</keyword>
<feature type="chain" id="PRO_1000014233" description="Small ribosomal subunit protein uS7">
    <location>
        <begin position="1"/>
        <end position="156"/>
    </location>
</feature>
<comment type="function">
    <text evidence="1">One of the primary rRNA binding proteins, it binds directly to 16S rRNA where it nucleates assembly of the head domain of the 30S subunit. Is located at the subunit interface close to the decoding center, probably blocks exit of the E-site tRNA.</text>
</comment>
<comment type="subunit">
    <text evidence="1">Part of the 30S ribosomal subunit. Contacts proteins S9 and S11.</text>
</comment>
<comment type="similarity">
    <text evidence="1">Belongs to the universal ribosomal protein uS7 family.</text>
</comment>